<sequence length="218" mass="23003">MDVEALLQSIPPLMVYLVVGAVVGIESLGIPLPGEIVLVSAAVLSSHPELAVNPIGVGGAAVIGAVVGDSIGYSIGRRFGLPLFDRLGRRFPKHFGPGHVALAERLFNRWGVRAVFLGRFIALLRIFAGPLAGALKMPYPRFLAANVTGGICWAGGTTALVYFAGMAAQHWLERFSWIALVIAVIAGITAAILLRERTSRAIAELEAEHCRKAGTTAA</sequence>
<feature type="chain" id="PRO_0000427035" description="Uncharacterized membrane protein MT2715">
    <location>
        <begin position="1"/>
        <end position="218"/>
    </location>
</feature>
<feature type="transmembrane region" description="Helical" evidence="1">
    <location>
        <begin position="10"/>
        <end position="30"/>
    </location>
</feature>
<feature type="transmembrane region" description="Helical" evidence="1">
    <location>
        <begin position="55"/>
        <end position="75"/>
    </location>
</feature>
<feature type="transmembrane region" description="Helical" evidence="1">
    <location>
        <begin position="147"/>
        <end position="167"/>
    </location>
</feature>
<feature type="transmembrane region" description="Helical" evidence="1">
    <location>
        <begin position="175"/>
        <end position="195"/>
    </location>
</feature>
<evidence type="ECO:0000255" key="1"/>
<evidence type="ECO:0000305" key="2"/>
<comment type="subcellular location">
    <subcellularLocation>
        <location evidence="2">Cell membrane</location>
        <topology evidence="2">Multi-pass membrane protein</topology>
    </subcellularLocation>
</comment>
<comment type="similarity">
    <text evidence="2">Belongs to the DedA family.</text>
</comment>
<dbReference type="EMBL" id="AE000516">
    <property type="protein sequence ID" value="AAK47029.1"/>
    <property type="molecule type" value="Genomic_DNA"/>
</dbReference>
<dbReference type="PIR" id="A70964">
    <property type="entry name" value="A70964"/>
</dbReference>
<dbReference type="RefSeq" id="WP_003413654.1">
    <property type="nucleotide sequence ID" value="NZ_KK341227.1"/>
</dbReference>
<dbReference type="KEGG" id="mtc:MT2715"/>
<dbReference type="PATRIC" id="fig|83331.31.peg.2924"/>
<dbReference type="HOGENOM" id="CLU_044208_4_0_11"/>
<dbReference type="Proteomes" id="UP000001020">
    <property type="component" value="Chromosome"/>
</dbReference>
<dbReference type="GO" id="GO:0005886">
    <property type="term" value="C:plasma membrane"/>
    <property type="evidence" value="ECO:0007669"/>
    <property type="project" value="UniProtKB-SubCell"/>
</dbReference>
<dbReference type="InterPro" id="IPR032818">
    <property type="entry name" value="DedA-like"/>
</dbReference>
<dbReference type="InterPro" id="IPR032816">
    <property type="entry name" value="VTT_dom"/>
</dbReference>
<dbReference type="PANTHER" id="PTHR30353">
    <property type="entry name" value="INNER MEMBRANE PROTEIN DEDA-RELATED"/>
    <property type="match status" value="1"/>
</dbReference>
<dbReference type="PANTHER" id="PTHR30353:SF15">
    <property type="entry name" value="INNER MEMBRANE PROTEIN YABI"/>
    <property type="match status" value="1"/>
</dbReference>
<dbReference type="Pfam" id="PF09335">
    <property type="entry name" value="VTT_dom"/>
    <property type="match status" value="1"/>
</dbReference>
<name>Y2637_MYCTO</name>
<gene>
    <name type="ordered locus">MT2715</name>
</gene>
<proteinExistence type="inferred from homology"/>
<accession>P9WP06</accession>
<accession>L0TA78</accession>
<accession>P63911</accession>
<accession>P71936</accession>
<reference key="1">
    <citation type="journal article" date="2002" name="J. Bacteriol.">
        <title>Whole-genome comparison of Mycobacterium tuberculosis clinical and laboratory strains.</title>
        <authorList>
            <person name="Fleischmann R.D."/>
            <person name="Alland D."/>
            <person name="Eisen J.A."/>
            <person name="Carpenter L."/>
            <person name="White O."/>
            <person name="Peterson J.D."/>
            <person name="DeBoy R.T."/>
            <person name="Dodson R.J."/>
            <person name="Gwinn M.L."/>
            <person name="Haft D.H."/>
            <person name="Hickey E.K."/>
            <person name="Kolonay J.F."/>
            <person name="Nelson W.C."/>
            <person name="Umayam L.A."/>
            <person name="Ermolaeva M.D."/>
            <person name="Salzberg S.L."/>
            <person name="Delcher A."/>
            <person name="Utterback T.R."/>
            <person name="Weidman J.F."/>
            <person name="Khouri H.M."/>
            <person name="Gill J."/>
            <person name="Mikula A."/>
            <person name="Bishai W."/>
            <person name="Jacobs W.R. Jr."/>
            <person name="Venter J.C."/>
            <person name="Fraser C.M."/>
        </authorList>
    </citation>
    <scope>NUCLEOTIDE SEQUENCE [LARGE SCALE GENOMIC DNA]</scope>
    <source>
        <strain>CDC 1551 / Oshkosh</strain>
    </source>
</reference>
<protein>
    <recommendedName>
        <fullName>Uncharacterized membrane protein MT2715</fullName>
    </recommendedName>
</protein>
<organism>
    <name type="scientific">Mycobacterium tuberculosis (strain CDC 1551 / Oshkosh)</name>
    <dbReference type="NCBI Taxonomy" id="83331"/>
    <lineage>
        <taxon>Bacteria</taxon>
        <taxon>Bacillati</taxon>
        <taxon>Actinomycetota</taxon>
        <taxon>Actinomycetes</taxon>
        <taxon>Mycobacteriales</taxon>
        <taxon>Mycobacteriaceae</taxon>
        <taxon>Mycobacterium</taxon>
        <taxon>Mycobacterium tuberculosis complex</taxon>
    </lineage>
</organism>
<keyword id="KW-1003">Cell membrane</keyword>
<keyword id="KW-0472">Membrane</keyword>
<keyword id="KW-1185">Reference proteome</keyword>
<keyword id="KW-0812">Transmembrane</keyword>
<keyword id="KW-1133">Transmembrane helix</keyword>